<gene>
    <name evidence="1" type="primary">aguA</name>
    <name type="ordered locus">PBPRB1916</name>
</gene>
<protein>
    <recommendedName>
        <fullName evidence="1">Putative agmatine deiminase</fullName>
        <ecNumber evidence="1">3.5.3.12</ecNumber>
    </recommendedName>
    <alternativeName>
        <fullName evidence="1">Agmatine iminohydrolase</fullName>
    </alternativeName>
</protein>
<evidence type="ECO:0000255" key="1">
    <source>
        <dbReference type="HAMAP-Rule" id="MF_01841"/>
    </source>
</evidence>
<evidence type="ECO:0000256" key="2">
    <source>
        <dbReference type="SAM" id="MobiDB-lite"/>
    </source>
</evidence>
<evidence type="ECO:0000305" key="3"/>
<accession>Q6LG16</accession>
<feature type="chain" id="PRO_0000194336" description="Putative agmatine deiminase">
    <location>
        <begin position="1"/>
        <end position="363"/>
    </location>
</feature>
<feature type="region of interest" description="Disordered" evidence="2">
    <location>
        <begin position="1"/>
        <end position="20"/>
    </location>
</feature>
<feature type="compositionally biased region" description="Polar residues" evidence="2">
    <location>
        <begin position="1"/>
        <end position="10"/>
    </location>
</feature>
<feature type="active site" description="Amidino-cysteine intermediate" evidence="1">
    <location>
        <position position="355"/>
    </location>
</feature>
<name>AGUA_PHOPR</name>
<organism>
    <name type="scientific">Photobacterium profundum (strain SS9)</name>
    <dbReference type="NCBI Taxonomy" id="298386"/>
    <lineage>
        <taxon>Bacteria</taxon>
        <taxon>Pseudomonadati</taxon>
        <taxon>Pseudomonadota</taxon>
        <taxon>Gammaproteobacteria</taxon>
        <taxon>Vibrionales</taxon>
        <taxon>Vibrionaceae</taxon>
        <taxon>Photobacterium</taxon>
    </lineage>
</organism>
<reference key="1">
    <citation type="journal article" date="2005" name="Science">
        <title>Life at depth: Photobacterium profundum genome sequence and expression analysis.</title>
        <authorList>
            <person name="Vezzi A."/>
            <person name="Campanaro S."/>
            <person name="D'Angelo M."/>
            <person name="Simonato F."/>
            <person name="Vitulo N."/>
            <person name="Lauro F.M."/>
            <person name="Cestaro A."/>
            <person name="Malacrida G."/>
            <person name="Simionati B."/>
            <person name="Cannata N."/>
            <person name="Romualdi C."/>
            <person name="Bartlett D.H."/>
            <person name="Valle G."/>
        </authorList>
    </citation>
    <scope>NUCLEOTIDE SEQUENCE [LARGE SCALE GENOMIC DNA]</scope>
    <source>
        <strain>ATCC BAA-1253 / SS9</strain>
    </source>
</reference>
<keyword id="KW-0378">Hydrolase</keyword>
<keyword id="KW-1185">Reference proteome</keyword>
<sequence length="363" mass="40680">MTKQLSTSPKQDGFRMPAEHEPQSAIWMAWPERTDNWRYGAKPAQATFVEVAKAIAKTTPVTMVVSAEQFENARVVLPSYIQVLEMSTDDSWMRDIGPSYVVNDHGKRRGVDWHFNALGQIGDGLYSPWDKDDAVARKVCETLGDDSYRAPIVLEGGSIHVDGEGTLYTTEECLLHPSRNPDLTREEIEDVLKVTLSIEKVIWIPQGLYNDETNGHVDNLIHVVRPGEIALTWCDDETDPQYLISRKAMDVLLTETDAKGRQIKIHKLPMPGPLYISEDEANGVDVSEGMERVPGERLAGSYANYLISNEHIIYPLLDEKHDKDVAMLLAKLYPNYEVTGVNAREILLGGGNIHCITQQIPKV</sequence>
<dbReference type="EC" id="3.5.3.12" evidence="1"/>
<dbReference type="EMBL" id="CR378681">
    <property type="protein sequence ID" value="CAG23764.1"/>
    <property type="status" value="ALT_FRAME"/>
    <property type="molecule type" value="Genomic_DNA"/>
</dbReference>
<dbReference type="SMR" id="Q6LG16"/>
<dbReference type="STRING" id="298386.PBPRB1916"/>
<dbReference type="KEGG" id="ppr:PBPRB1916"/>
<dbReference type="eggNOG" id="COG2957">
    <property type="taxonomic scope" value="Bacteria"/>
</dbReference>
<dbReference type="HOGENOM" id="CLU_037682_2_1_6"/>
<dbReference type="Proteomes" id="UP000000593">
    <property type="component" value="Chromosome 2"/>
</dbReference>
<dbReference type="GO" id="GO:0047632">
    <property type="term" value="F:agmatine deiminase activity"/>
    <property type="evidence" value="ECO:0007669"/>
    <property type="project" value="UniProtKB-UniRule"/>
</dbReference>
<dbReference type="GO" id="GO:0004668">
    <property type="term" value="F:protein-arginine deiminase activity"/>
    <property type="evidence" value="ECO:0007669"/>
    <property type="project" value="InterPro"/>
</dbReference>
<dbReference type="GO" id="GO:0009446">
    <property type="term" value="P:putrescine biosynthetic process"/>
    <property type="evidence" value="ECO:0007669"/>
    <property type="project" value="InterPro"/>
</dbReference>
<dbReference type="Gene3D" id="3.75.10.10">
    <property type="entry name" value="L-arginine/glycine Amidinotransferase, Chain A"/>
    <property type="match status" value="1"/>
</dbReference>
<dbReference type="HAMAP" id="MF_01841">
    <property type="entry name" value="Agmatine_deimin"/>
    <property type="match status" value="1"/>
</dbReference>
<dbReference type="InterPro" id="IPR017754">
    <property type="entry name" value="Agmatine_deiminase"/>
</dbReference>
<dbReference type="InterPro" id="IPR007466">
    <property type="entry name" value="Peptidyl-Arg-deiminase_porph"/>
</dbReference>
<dbReference type="NCBIfam" id="TIGR03380">
    <property type="entry name" value="agmatine_aguA"/>
    <property type="match status" value="1"/>
</dbReference>
<dbReference type="NCBIfam" id="NF010070">
    <property type="entry name" value="PRK13551.1"/>
    <property type="match status" value="1"/>
</dbReference>
<dbReference type="PANTHER" id="PTHR31377">
    <property type="entry name" value="AGMATINE DEIMINASE-RELATED"/>
    <property type="match status" value="1"/>
</dbReference>
<dbReference type="PANTHER" id="PTHR31377:SF0">
    <property type="entry name" value="AGMATINE DEIMINASE-RELATED"/>
    <property type="match status" value="1"/>
</dbReference>
<dbReference type="Pfam" id="PF04371">
    <property type="entry name" value="PAD_porph"/>
    <property type="match status" value="1"/>
</dbReference>
<dbReference type="SUPFAM" id="SSF55909">
    <property type="entry name" value="Pentein"/>
    <property type="match status" value="1"/>
</dbReference>
<comment type="catalytic activity">
    <reaction evidence="1">
        <text>agmatine + H2O = N-carbamoylputrescine + NH4(+)</text>
        <dbReference type="Rhea" id="RHEA:18037"/>
        <dbReference type="ChEBI" id="CHEBI:15377"/>
        <dbReference type="ChEBI" id="CHEBI:28938"/>
        <dbReference type="ChEBI" id="CHEBI:58145"/>
        <dbReference type="ChEBI" id="CHEBI:58318"/>
        <dbReference type="EC" id="3.5.3.12"/>
    </reaction>
</comment>
<comment type="similarity">
    <text evidence="1">Belongs to the agmatine deiminase family.</text>
</comment>
<comment type="sequence caution" evidence="3">
    <conflict type="frameshift">
        <sequence resource="EMBL-CDS" id="CAG23764"/>
    </conflict>
</comment>
<proteinExistence type="inferred from homology"/>